<feature type="chain" id="PRO_1000050158" description="Pyrrolidone-carboxylate peptidase">
    <location>
        <begin position="1"/>
        <end position="215"/>
    </location>
</feature>
<feature type="active site" evidence="1">
    <location>
        <position position="80"/>
    </location>
</feature>
<feature type="active site" evidence="1">
    <location>
        <position position="143"/>
    </location>
</feature>
<feature type="active site" evidence="1">
    <location>
        <position position="167"/>
    </location>
</feature>
<keyword id="KW-0963">Cytoplasm</keyword>
<keyword id="KW-0378">Hydrolase</keyword>
<keyword id="KW-0645">Protease</keyword>
<keyword id="KW-0788">Thiol protease</keyword>
<proteinExistence type="inferred from homology"/>
<dbReference type="EC" id="3.4.19.3" evidence="1"/>
<dbReference type="EMBL" id="CP000668">
    <property type="protein sequence ID" value="ABP39955.1"/>
    <property type="molecule type" value="Genomic_DNA"/>
</dbReference>
<dbReference type="RefSeq" id="WP_002209662.1">
    <property type="nucleotide sequence ID" value="NZ_CP009715.1"/>
</dbReference>
<dbReference type="SMR" id="A4TKZ3"/>
<dbReference type="MEROPS" id="C15.001"/>
<dbReference type="GeneID" id="57975988"/>
<dbReference type="KEGG" id="ypp:YPDSF_1568"/>
<dbReference type="PATRIC" id="fig|386656.14.peg.2202"/>
<dbReference type="GO" id="GO:0005829">
    <property type="term" value="C:cytosol"/>
    <property type="evidence" value="ECO:0007669"/>
    <property type="project" value="InterPro"/>
</dbReference>
<dbReference type="GO" id="GO:0016920">
    <property type="term" value="F:pyroglutamyl-peptidase activity"/>
    <property type="evidence" value="ECO:0007669"/>
    <property type="project" value="UniProtKB-UniRule"/>
</dbReference>
<dbReference type="GO" id="GO:0006508">
    <property type="term" value="P:proteolysis"/>
    <property type="evidence" value="ECO:0007669"/>
    <property type="project" value="UniProtKB-KW"/>
</dbReference>
<dbReference type="CDD" id="cd00501">
    <property type="entry name" value="Peptidase_C15"/>
    <property type="match status" value="1"/>
</dbReference>
<dbReference type="FunFam" id="3.40.630.20:FF:000001">
    <property type="entry name" value="Pyrrolidone-carboxylate peptidase"/>
    <property type="match status" value="1"/>
</dbReference>
<dbReference type="Gene3D" id="3.40.630.20">
    <property type="entry name" value="Peptidase C15, pyroglutamyl peptidase I-like"/>
    <property type="match status" value="1"/>
</dbReference>
<dbReference type="HAMAP" id="MF_00417">
    <property type="entry name" value="Pyrrolid_peptidase"/>
    <property type="match status" value="1"/>
</dbReference>
<dbReference type="InterPro" id="IPR000816">
    <property type="entry name" value="Peptidase_C15"/>
</dbReference>
<dbReference type="InterPro" id="IPR016125">
    <property type="entry name" value="Peptidase_C15-like"/>
</dbReference>
<dbReference type="InterPro" id="IPR036440">
    <property type="entry name" value="Peptidase_C15-like_sf"/>
</dbReference>
<dbReference type="InterPro" id="IPR029762">
    <property type="entry name" value="PGP-I_bact-type"/>
</dbReference>
<dbReference type="InterPro" id="IPR033694">
    <property type="entry name" value="PGPEP1_Cys_AS"/>
</dbReference>
<dbReference type="InterPro" id="IPR033693">
    <property type="entry name" value="PGPEP1_Glu_AS"/>
</dbReference>
<dbReference type="NCBIfam" id="NF009676">
    <property type="entry name" value="PRK13197.1"/>
    <property type="match status" value="1"/>
</dbReference>
<dbReference type="NCBIfam" id="TIGR00504">
    <property type="entry name" value="pyro_pdase"/>
    <property type="match status" value="1"/>
</dbReference>
<dbReference type="PANTHER" id="PTHR23402">
    <property type="entry name" value="PROTEASE FAMILY C15 PYROGLUTAMYL-PEPTIDASE I-RELATED"/>
    <property type="match status" value="1"/>
</dbReference>
<dbReference type="PANTHER" id="PTHR23402:SF1">
    <property type="entry name" value="PYROGLUTAMYL-PEPTIDASE I"/>
    <property type="match status" value="1"/>
</dbReference>
<dbReference type="Pfam" id="PF01470">
    <property type="entry name" value="Peptidase_C15"/>
    <property type="match status" value="1"/>
</dbReference>
<dbReference type="PIRSF" id="PIRSF015592">
    <property type="entry name" value="Prld-crbxl_pptds"/>
    <property type="match status" value="1"/>
</dbReference>
<dbReference type="PRINTS" id="PR00706">
    <property type="entry name" value="PYROGLUPTASE"/>
</dbReference>
<dbReference type="SUPFAM" id="SSF53182">
    <property type="entry name" value="Pyrrolidone carboxyl peptidase (pyroglutamate aminopeptidase)"/>
    <property type="match status" value="1"/>
</dbReference>
<dbReference type="PROSITE" id="PS01334">
    <property type="entry name" value="PYRASE_CYS"/>
    <property type="match status" value="1"/>
</dbReference>
<dbReference type="PROSITE" id="PS01333">
    <property type="entry name" value="PYRASE_GLU"/>
    <property type="match status" value="1"/>
</dbReference>
<reference key="1">
    <citation type="submission" date="2007-02" db="EMBL/GenBank/DDBJ databases">
        <title>Complete sequence of chromosome of Yersinia pestis Pestoides F.</title>
        <authorList>
            <consortium name="US DOE Joint Genome Institute"/>
            <person name="Copeland A."/>
            <person name="Lucas S."/>
            <person name="Lapidus A."/>
            <person name="Barry K."/>
            <person name="Detter J.C."/>
            <person name="Glavina del Rio T."/>
            <person name="Hammon N."/>
            <person name="Israni S."/>
            <person name="Dalin E."/>
            <person name="Tice H."/>
            <person name="Pitluck S."/>
            <person name="Di Bartolo G."/>
            <person name="Chain P."/>
            <person name="Malfatti S."/>
            <person name="Shin M."/>
            <person name="Vergez L."/>
            <person name="Schmutz J."/>
            <person name="Larimer F."/>
            <person name="Land M."/>
            <person name="Hauser L."/>
            <person name="Worsham P."/>
            <person name="Chu M."/>
            <person name="Bearden S."/>
            <person name="Garcia E."/>
            <person name="Richardson P."/>
        </authorList>
    </citation>
    <scope>NUCLEOTIDE SEQUENCE [LARGE SCALE GENOMIC DNA]</scope>
    <source>
        <strain>Pestoides F</strain>
    </source>
</reference>
<gene>
    <name evidence="1" type="primary">pcp</name>
    <name type="ordered locus">YPDSF_1568</name>
</gene>
<organism>
    <name type="scientific">Yersinia pestis (strain Pestoides F)</name>
    <dbReference type="NCBI Taxonomy" id="386656"/>
    <lineage>
        <taxon>Bacteria</taxon>
        <taxon>Pseudomonadati</taxon>
        <taxon>Pseudomonadota</taxon>
        <taxon>Gammaproteobacteria</taxon>
        <taxon>Enterobacterales</taxon>
        <taxon>Yersiniaceae</taxon>
        <taxon>Yersinia</taxon>
    </lineage>
</organism>
<protein>
    <recommendedName>
        <fullName evidence="1">Pyrrolidone-carboxylate peptidase</fullName>
        <ecNumber evidence="1">3.4.19.3</ecNumber>
    </recommendedName>
    <alternativeName>
        <fullName evidence="1">5-oxoprolyl-peptidase</fullName>
    </alternativeName>
    <alternativeName>
        <fullName evidence="1">Pyroglutamyl-peptidase I</fullName>
        <shortName evidence="1">PGP-I</shortName>
        <shortName evidence="1">Pyrase</shortName>
    </alternativeName>
</protein>
<name>PCP_YERPP</name>
<comment type="function">
    <text evidence="1">Removes 5-oxoproline from various penultimate amino acid residues except L-proline.</text>
</comment>
<comment type="catalytic activity">
    <reaction evidence="1">
        <text>Release of an N-terminal pyroglutamyl group from a polypeptide, the second amino acid generally not being Pro.</text>
        <dbReference type="EC" id="3.4.19.3"/>
    </reaction>
</comment>
<comment type="subunit">
    <text evidence="1">Homotetramer.</text>
</comment>
<comment type="subcellular location">
    <subcellularLocation>
        <location evidence="1">Cytoplasm</location>
    </subcellularLocation>
</comment>
<comment type="similarity">
    <text evidence="1">Belongs to the peptidase C15 family.</text>
</comment>
<accession>A4TKZ3</accession>
<evidence type="ECO:0000255" key="1">
    <source>
        <dbReference type="HAMAP-Rule" id="MF_00417"/>
    </source>
</evidence>
<sequence>MRRVLITGFEPFGGERINPSWEVVKQMNDLMMGGVRIVARQLPCAFGEALTALNTAIDDVQPVLVLAIGQAGGRADITIERVAINVDDARIPDNLGNQPVDQPIIQEGPAAYFTRLPIKAMVQGIREAGIPASVSQTAGTYVCNHVMYGLLHRLNQFNNEVKGGFIHIPYLPEQAVDHPGAPSMSAQSVLVALELAISIALQIEHDLHITGGAVH</sequence>